<evidence type="ECO:0000250" key="1"/>
<evidence type="ECO:0000255" key="2"/>
<evidence type="ECO:0000305" key="3"/>
<proteinExistence type="inferred from homology"/>
<name>AGALB_ASPFU</name>
<gene>
    <name type="primary">aglB</name>
    <name type="synonym">agl5</name>
    <name type="ORF">AFUA_5G02130</name>
</gene>
<keyword id="KW-1015">Disulfide bond</keyword>
<keyword id="KW-0325">Glycoprotein</keyword>
<keyword id="KW-0326">Glycosidase</keyword>
<keyword id="KW-0378">Hydrolase</keyword>
<keyword id="KW-1185">Reference proteome</keyword>
<keyword id="KW-0964">Secreted</keyword>
<keyword id="KW-0732">Signal</keyword>
<organism>
    <name type="scientific">Aspergillus fumigatus (strain ATCC MYA-4609 / CBS 101355 / FGSC A1100 / Af293)</name>
    <name type="common">Neosartorya fumigata</name>
    <dbReference type="NCBI Taxonomy" id="330879"/>
    <lineage>
        <taxon>Eukaryota</taxon>
        <taxon>Fungi</taxon>
        <taxon>Dikarya</taxon>
        <taxon>Ascomycota</taxon>
        <taxon>Pezizomycotina</taxon>
        <taxon>Eurotiomycetes</taxon>
        <taxon>Eurotiomycetidae</taxon>
        <taxon>Eurotiales</taxon>
        <taxon>Aspergillaceae</taxon>
        <taxon>Aspergillus</taxon>
        <taxon>Aspergillus subgen. Fumigati</taxon>
    </lineage>
</organism>
<dbReference type="EC" id="3.2.1.22"/>
<dbReference type="EMBL" id="AAHF01000011">
    <property type="protein sequence ID" value="EAL86091.1"/>
    <property type="status" value="ALT_SEQ"/>
    <property type="molecule type" value="Genomic_DNA"/>
</dbReference>
<dbReference type="RefSeq" id="XP_748129.1">
    <property type="nucleotide sequence ID" value="XM_743036.1"/>
</dbReference>
<dbReference type="SMR" id="Q4WE86"/>
<dbReference type="STRING" id="330879.Q4WE86"/>
<dbReference type="CAZy" id="GH27">
    <property type="family name" value="Glycoside Hydrolase Family 27"/>
</dbReference>
<dbReference type="GlyCosmos" id="Q4WE86">
    <property type="glycosylation" value="4 sites, No reported glycans"/>
</dbReference>
<dbReference type="GeneID" id="3505626"/>
<dbReference type="KEGG" id="afm:AFUA_5G02130"/>
<dbReference type="VEuPathDB" id="FungiDB:Afu5g02130"/>
<dbReference type="eggNOG" id="KOG2366">
    <property type="taxonomic scope" value="Eukaryota"/>
</dbReference>
<dbReference type="HOGENOM" id="CLU_013093_2_2_1"/>
<dbReference type="InParanoid" id="Q4WE86"/>
<dbReference type="OrthoDB" id="5795902at2759"/>
<dbReference type="Proteomes" id="UP000002530">
    <property type="component" value="Chromosome 5"/>
</dbReference>
<dbReference type="GO" id="GO:0005576">
    <property type="term" value="C:extracellular region"/>
    <property type="evidence" value="ECO:0007669"/>
    <property type="project" value="UniProtKB-SubCell"/>
</dbReference>
<dbReference type="GO" id="GO:0004557">
    <property type="term" value="F:alpha-galactosidase activity"/>
    <property type="evidence" value="ECO:0007669"/>
    <property type="project" value="UniProtKB-EC"/>
</dbReference>
<dbReference type="GO" id="GO:0005975">
    <property type="term" value="P:carbohydrate metabolic process"/>
    <property type="evidence" value="ECO:0007669"/>
    <property type="project" value="InterPro"/>
</dbReference>
<dbReference type="CDD" id="cd14792">
    <property type="entry name" value="GH27"/>
    <property type="match status" value="1"/>
</dbReference>
<dbReference type="FunFam" id="2.60.40.1180:FF:000049">
    <property type="entry name" value="Alpha-galactosidase"/>
    <property type="match status" value="1"/>
</dbReference>
<dbReference type="FunFam" id="3.20.20.70:FF:000307">
    <property type="entry name" value="Alpha-galactosidase"/>
    <property type="match status" value="1"/>
</dbReference>
<dbReference type="Gene3D" id="3.20.20.70">
    <property type="entry name" value="Aldolase class I"/>
    <property type="match status" value="1"/>
</dbReference>
<dbReference type="Gene3D" id="2.60.40.1180">
    <property type="entry name" value="Golgi alpha-mannosidase II"/>
    <property type="match status" value="1"/>
</dbReference>
<dbReference type="InterPro" id="IPR013785">
    <property type="entry name" value="Aldolase_TIM"/>
</dbReference>
<dbReference type="InterPro" id="IPR002241">
    <property type="entry name" value="Glyco_hydro_27"/>
</dbReference>
<dbReference type="InterPro" id="IPR000111">
    <property type="entry name" value="Glyco_hydro_27/36_CS"/>
</dbReference>
<dbReference type="InterPro" id="IPR013780">
    <property type="entry name" value="Glyco_hydro_b"/>
</dbReference>
<dbReference type="InterPro" id="IPR017853">
    <property type="entry name" value="Glycoside_hydrolase_SF"/>
</dbReference>
<dbReference type="InterPro" id="IPR041233">
    <property type="entry name" value="Melibiase_C"/>
</dbReference>
<dbReference type="PANTHER" id="PTHR11452:SF61">
    <property type="entry name" value="ALPHA-GALACTOSIDASE B-RELATED"/>
    <property type="match status" value="1"/>
</dbReference>
<dbReference type="PANTHER" id="PTHR11452">
    <property type="entry name" value="ALPHA-GALACTOSIDASE/ALPHA-N-ACETYLGALACTOSAMINIDASE"/>
    <property type="match status" value="1"/>
</dbReference>
<dbReference type="Pfam" id="PF16499">
    <property type="entry name" value="Melibiase_2"/>
    <property type="match status" value="2"/>
</dbReference>
<dbReference type="Pfam" id="PF17801">
    <property type="entry name" value="Melibiase_C"/>
    <property type="match status" value="1"/>
</dbReference>
<dbReference type="PRINTS" id="PR00740">
    <property type="entry name" value="GLHYDRLASE27"/>
</dbReference>
<dbReference type="SUPFAM" id="SSF51445">
    <property type="entry name" value="(Trans)glycosidases"/>
    <property type="match status" value="1"/>
</dbReference>
<dbReference type="SUPFAM" id="SSF51011">
    <property type="entry name" value="Glycosyl hydrolase domain"/>
    <property type="match status" value="1"/>
</dbReference>
<dbReference type="PROSITE" id="PS00512">
    <property type="entry name" value="ALPHA_GALACTOSIDASE"/>
    <property type="match status" value="1"/>
</dbReference>
<sequence length="447" mass="49202">MTTFFSLTTAAAVLTLARGSNALVRPGNVGKLPALGWNTWNAFGCDIDATKIMTAANEVVNLGLKDLGYEYINIDDCWSVKSGRDASTQRIIPDPDKFPDGISGVADQIHDLGLKIGIYSSAGLTTCAGYPASLGYEDIDAQTFAEWGIDYLKYDNCGVPSNWTDTYTYCVPDPGSKATNGTCPDNKNPAPAGYDWRTSLTAERYRRMRDALVSVDRTILYSLCEWGQANVNDWGNETGNSWRTTGDITPSWPRIAAIANENSFLMNHVDFWGYPDPDMLEVGNGNLTLAENRAHFALWAAMKSPLIIGTALDSISQDHLAILSNKILLKFHQDPVIGRPAQPYKWGYNPDWTFDPAHPAEYWSGASSVLGGTLVLMLNSEDTTQRRTAVWKEVPELKDVLGRQGKRRIGFRVTDVWTGKDLGCVRDHYSVELESHDVAALVVGRAC</sequence>
<feature type="signal peptide" evidence="2">
    <location>
        <begin position="1"/>
        <end position="25"/>
    </location>
</feature>
<feature type="chain" id="PRO_0000393217" description="Probable alpha-galactosidase B">
    <location>
        <begin position="26"/>
        <end position="447"/>
    </location>
</feature>
<feature type="active site" description="Nucleophile" evidence="1">
    <location>
        <position position="155"/>
    </location>
</feature>
<feature type="active site" description="Proton donor" evidence="1">
    <location>
        <position position="247"/>
    </location>
</feature>
<feature type="binding site" evidence="1">
    <location>
        <begin position="225"/>
        <end position="229"/>
    </location>
    <ligand>
        <name>substrate</name>
    </ligand>
</feature>
<feature type="glycosylation site" description="N-linked (GlcNAc...) asparagine" evidence="2">
    <location>
        <position position="162"/>
    </location>
</feature>
<feature type="glycosylation site" description="N-linked (GlcNAc...) asparagine" evidence="2">
    <location>
        <position position="180"/>
    </location>
</feature>
<feature type="glycosylation site" description="N-linked (GlcNAc...) asparagine" evidence="2">
    <location>
        <position position="236"/>
    </location>
</feature>
<feature type="glycosylation site" description="N-linked (GlcNAc...) asparagine" evidence="2">
    <location>
        <position position="286"/>
    </location>
</feature>
<feature type="disulfide bond" evidence="1">
    <location>
        <begin position="45"/>
        <end position="77"/>
    </location>
</feature>
<feature type="disulfide bond" evidence="1">
    <location>
        <begin position="127"/>
        <end position="157"/>
    </location>
</feature>
<comment type="function">
    <text evidence="1">Hydrolyzes a variety of simple alpha-D-galactoside as well as more complex molecules such as oligosaccharides and polysaccharides.</text>
</comment>
<comment type="catalytic activity">
    <reaction>
        <text>Hydrolysis of terminal, non-reducing alpha-D-galactose residues in alpha-D-galactosides, including galactose oligosaccharides, galactomannans and galactolipids.</text>
        <dbReference type="EC" id="3.2.1.22"/>
    </reaction>
</comment>
<comment type="subcellular location">
    <subcellularLocation>
        <location evidence="3">Secreted</location>
    </subcellularLocation>
</comment>
<comment type="similarity">
    <text evidence="3">Belongs to the glycosyl hydrolase 27 family.</text>
</comment>
<comment type="sequence caution" evidence="3">
    <conflict type="erroneous gene model prediction">
        <sequence resource="EMBL-CDS" id="EAL86091"/>
    </conflict>
</comment>
<accession>Q4WE86</accession>
<reference key="1">
    <citation type="journal article" date="2005" name="Nature">
        <title>Genomic sequence of the pathogenic and allergenic filamentous fungus Aspergillus fumigatus.</title>
        <authorList>
            <person name="Nierman W.C."/>
            <person name="Pain A."/>
            <person name="Anderson M.J."/>
            <person name="Wortman J.R."/>
            <person name="Kim H.S."/>
            <person name="Arroyo J."/>
            <person name="Berriman M."/>
            <person name="Abe K."/>
            <person name="Archer D.B."/>
            <person name="Bermejo C."/>
            <person name="Bennett J.W."/>
            <person name="Bowyer P."/>
            <person name="Chen D."/>
            <person name="Collins M."/>
            <person name="Coulsen R."/>
            <person name="Davies R."/>
            <person name="Dyer P.S."/>
            <person name="Farman M.L."/>
            <person name="Fedorova N."/>
            <person name="Fedorova N.D."/>
            <person name="Feldblyum T.V."/>
            <person name="Fischer R."/>
            <person name="Fosker N."/>
            <person name="Fraser A."/>
            <person name="Garcia J.L."/>
            <person name="Garcia M.J."/>
            <person name="Goble A."/>
            <person name="Goldman G.H."/>
            <person name="Gomi K."/>
            <person name="Griffith-Jones S."/>
            <person name="Gwilliam R."/>
            <person name="Haas B.J."/>
            <person name="Haas H."/>
            <person name="Harris D.E."/>
            <person name="Horiuchi H."/>
            <person name="Huang J."/>
            <person name="Humphray S."/>
            <person name="Jimenez J."/>
            <person name="Keller N."/>
            <person name="Khouri H."/>
            <person name="Kitamoto K."/>
            <person name="Kobayashi T."/>
            <person name="Konzack S."/>
            <person name="Kulkarni R."/>
            <person name="Kumagai T."/>
            <person name="Lafton A."/>
            <person name="Latge J.-P."/>
            <person name="Li W."/>
            <person name="Lord A."/>
            <person name="Lu C."/>
            <person name="Majoros W.H."/>
            <person name="May G.S."/>
            <person name="Miller B.L."/>
            <person name="Mohamoud Y."/>
            <person name="Molina M."/>
            <person name="Monod M."/>
            <person name="Mouyna I."/>
            <person name="Mulligan S."/>
            <person name="Murphy L.D."/>
            <person name="O'Neil S."/>
            <person name="Paulsen I."/>
            <person name="Penalva M.A."/>
            <person name="Pertea M."/>
            <person name="Price C."/>
            <person name="Pritchard B.L."/>
            <person name="Quail M.A."/>
            <person name="Rabbinowitsch E."/>
            <person name="Rawlins N."/>
            <person name="Rajandream M.A."/>
            <person name="Reichard U."/>
            <person name="Renauld H."/>
            <person name="Robson G.D."/>
            <person name="Rodriguez de Cordoba S."/>
            <person name="Rodriguez-Pena J.M."/>
            <person name="Ronning C.M."/>
            <person name="Rutter S."/>
            <person name="Salzberg S.L."/>
            <person name="Sanchez M."/>
            <person name="Sanchez-Ferrero J.C."/>
            <person name="Saunders D."/>
            <person name="Seeger K."/>
            <person name="Squares R."/>
            <person name="Squares S."/>
            <person name="Takeuchi M."/>
            <person name="Tekaia F."/>
            <person name="Turner G."/>
            <person name="Vazquez de Aldana C.R."/>
            <person name="Weidman J."/>
            <person name="White O."/>
            <person name="Woodward J.R."/>
            <person name="Yu J.-H."/>
            <person name="Fraser C.M."/>
            <person name="Galagan J.E."/>
            <person name="Asai K."/>
            <person name="Machida M."/>
            <person name="Hall N."/>
            <person name="Barrell B.G."/>
            <person name="Denning D.W."/>
        </authorList>
    </citation>
    <scope>NUCLEOTIDE SEQUENCE [LARGE SCALE GENOMIC DNA]</scope>
    <source>
        <strain>ATCC MYA-4609 / CBS 101355 / FGSC A1100 / Af293</strain>
    </source>
</reference>
<protein>
    <recommendedName>
        <fullName>Probable alpha-galactosidase B</fullName>
        <ecNumber>3.2.1.22</ecNumber>
    </recommendedName>
    <alternativeName>
        <fullName>Melibiase B</fullName>
    </alternativeName>
</protein>